<dbReference type="EC" id="2.5.1.6" evidence="1"/>
<dbReference type="EMBL" id="CP000350">
    <property type="protein sequence ID" value="ABJ76202.1"/>
    <property type="molecule type" value="Genomic_DNA"/>
</dbReference>
<dbReference type="RefSeq" id="WP_011670401.1">
    <property type="nucleotide sequence ID" value="NC_008510.1"/>
</dbReference>
<dbReference type="SMR" id="Q04SB8"/>
<dbReference type="KEGG" id="lbj:LBJ_1645"/>
<dbReference type="HOGENOM" id="CLU_041802_1_1_12"/>
<dbReference type="UniPathway" id="UPA00315">
    <property type="reaction ID" value="UER00080"/>
</dbReference>
<dbReference type="Proteomes" id="UP000000656">
    <property type="component" value="Chromosome 1"/>
</dbReference>
<dbReference type="GO" id="GO:0005737">
    <property type="term" value="C:cytoplasm"/>
    <property type="evidence" value="ECO:0007669"/>
    <property type="project" value="UniProtKB-SubCell"/>
</dbReference>
<dbReference type="GO" id="GO:0005524">
    <property type="term" value="F:ATP binding"/>
    <property type="evidence" value="ECO:0007669"/>
    <property type="project" value="UniProtKB-UniRule"/>
</dbReference>
<dbReference type="GO" id="GO:0000287">
    <property type="term" value="F:magnesium ion binding"/>
    <property type="evidence" value="ECO:0007669"/>
    <property type="project" value="UniProtKB-UniRule"/>
</dbReference>
<dbReference type="GO" id="GO:0004478">
    <property type="term" value="F:methionine adenosyltransferase activity"/>
    <property type="evidence" value="ECO:0007669"/>
    <property type="project" value="UniProtKB-UniRule"/>
</dbReference>
<dbReference type="GO" id="GO:0006730">
    <property type="term" value="P:one-carbon metabolic process"/>
    <property type="evidence" value="ECO:0007669"/>
    <property type="project" value="UniProtKB-KW"/>
</dbReference>
<dbReference type="GO" id="GO:0006556">
    <property type="term" value="P:S-adenosylmethionine biosynthetic process"/>
    <property type="evidence" value="ECO:0007669"/>
    <property type="project" value="UniProtKB-UniRule"/>
</dbReference>
<dbReference type="CDD" id="cd18079">
    <property type="entry name" value="S-AdoMet_synt"/>
    <property type="match status" value="1"/>
</dbReference>
<dbReference type="FunFam" id="3.30.300.10:FF:000003">
    <property type="entry name" value="S-adenosylmethionine synthase"/>
    <property type="match status" value="1"/>
</dbReference>
<dbReference type="Gene3D" id="3.30.300.10">
    <property type="match status" value="3"/>
</dbReference>
<dbReference type="HAMAP" id="MF_00086">
    <property type="entry name" value="S_AdoMet_synth1"/>
    <property type="match status" value="1"/>
</dbReference>
<dbReference type="InterPro" id="IPR022631">
    <property type="entry name" value="ADOMET_SYNTHASE_CS"/>
</dbReference>
<dbReference type="InterPro" id="IPR022630">
    <property type="entry name" value="S-AdoMet_synt_C"/>
</dbReference>
<dbReference type="InterPro" id="IPR022629">
    <property type="entry name" value="S-AdoMet_synt_central"/>
</dbReference>
<dbReference type="InterPro" id="IPR022628">
    <property type="entry name" value="S-AdoMet_synt_N"/>
</dbReference>
<dbReference type="InterPro" id="IPR002133">
    <property type="entry name" value="S-AdoMet_synthetase"/>
</dbReference>
<dbReference type="InterPro" id="IPR022636">
    <property type="entry name" value="S-AdoMet_synthetase_sfam"/>
</dbReference>
<dbReference type="NCBIfam" id="TIGR01034">
    <property type="entry name" value="metK"/>
    <property type="match status" value="1"/>
</dbReference>
<dbReference type="PANTHER" id="PTHR11964">
    <property type="entry name" value="S-ADENOSYLMETHIONINE SYNTHETASE"/>
    <property type="match status" value="1"/>
</dbReference>
<dbReference type="Pfam" id="PF02773">
    <property type="entry name" value="S-AdoMet_synt_C"/>
    <property type="match status" value="1"/>
</dbReference>
<dbReference type="Pfam" id="PF02772">
    <property type="entry name" value="S-AdoMet_synt_M"/>
    <property type="match status" value="1"/>
</dbReference>
<dbReference type="Pfam" id="PF00438">
    <property type="entry name" value="S-AdoMet_synt_N"/>
    <property type="match status" value="1"/>
</dbReference>
<dbReference type="PIRSF" id="PIRSF000497">
    <property type="entry name" value="MAT"/>
    <property type="match status" value="1"/>
</dbReference>
<dbReference type="SUPFAM" id="SSF55973">
    <property type="entry name" value="S-adenosylmethionine synthetase"/>
    <property type="match status" value="3"/>
</dbReference>
<dbReference type="PROSITE" id="PS00376">
    <property type="entry name" value="ADOMET_SYNTHASE_1"/>
    <property type="match status" value="1"/>
</dbReference>
<dbReference type="PROSITE" id="PS00377">
    <property type="entry name" value="ADOMET_SYNTHASE_2"/>
    <property type="match status" value="1"/>
</dbReference>
<feature type="chain" id="PRO_0000302931" description="S-adenosylmethionine synthase">
    <location>
        <begin position="1"/>
        <end position="386"/>
    </location>
</feature>
<feature type="region of interest" description="Flexible loop" evidence="1">
    <location>
        <begin position="101"/>
        <end position="111"/>
    </location>
</feature>
<feature type="binding site" description="in other chain" evidence="1">
    <location>
        <position position="17"/>
    </location>
    <ligand>
        <name>ATP</name>
        <dbReference type="ChEBI" id="CHEBI:30616"/>
        <note>ligand shared between two neighboring subunits</note>
    </ligand>
</feature>
<feature type="binding site" evidence="1">
    <location>
        <position position="19"/>
    </location>
    <ligand>
        <name>Mg(2+)</name>
        <dbReference type="ChEBI" id="CHEBI:18420"/>
    </ligand>
</feature>
<feature type="binding site" evidence="1">
    <location>
        <position position="45"/>
    </location>
    <ligand>
        <name>K(+)</name>
        <dbReference type="ChEBI" id="CHEBI:29103"/>
    </ligand>
</feature>
<feature type="binding site" description="in other chain" evidence="1">
    <location>
        <position position="58"/>
    </location>
    <ligand>
        <name>L-methionine</name>
        <dbReference type="ChEBI" id="CHEBI:57844"/>
        <note>ligand shared between two neighboring subunits</note>
    </ligand>
</feature>
<feature type="binding site" description="in other chain" evidence="1">
    <location>
        <position position="101"/>
    </location>
    <ligand>
        <name>L-methionine</name>
        <dbReference type="ChEBI" id="CHEBI:57844"/>
        <note>ligand shared between two neighboring subunits</note>
    </ligand>
</feature>
<feature type="binding site" description="in other chain" evidence="1">
    <location>
        <begin position="168"/>
        <end position="170"/>
    </location>
    <ligand>
        <name>ATP</name>
        <dbReference type="ChEBI" id="CHEBI:30616"/>
        <note>ligand shared between two neighboring subunits</note>
    </ligand>
</feature>
<feature type="binding site" evidence="1">
    <location>
        <position position="242"/>
    </location>
    <ligand>
        <name>ATP</name>
        <dbReference type="ChEBI" id="CHEBI:30616"/>
        <note>ligand shared between two neighboring subunits</note>
    </ligand>
</feature>
<feature type="binding site" evidence="1">
    <location>
        <position position="242"/>
    </location>
    <ligand>
        <name>L-methionine</name>
        <dbReference type="ChEBI" id="CHEBI:57844"/>
        <note>ligand shared between two neighboring subunits</note>
    </ligand>
</feature>
<feature type="binding site" description="in other chain" evidence="1">
    <location>
        <begin position="248"/>
        <end position="249"/>
    </location>
    <ligand>
        <name>ATP</name>
        <dbReference type="ChEBI" id="CHEBI:30616"/>
        <note>ligand shared between two neighboring subunits</note>
    </ligand>
</feature>
<feature type="binding site" evidence="1">
    <location>
        <position position="265"/>
    </location>
    <ligand>
        <name>ATP</name>
        <dbReference type="ChEBI" id="CHEBI:30616"/>
        <note>ligand shared between two neighboring subunits</note>
    </ligand>
</feature>
<feature type="binding site" evidence="1">
    <location>
        <position position="269"/>
    </location>
    <ligand>
        <name>ATP</name>
        <dbReference type="ChEBI" id="CHEBI:30616"/>
        <note>ligand shared between two neighboring subunits</note>
    </ligand>
</feature>
<feature type="binding site" description="in other chain" evidence="1">
    <location>
        <position position="273"/>
    </location>
    <ligand>
        <name>L-methionine</name>
        <dbReference type="ChEBI" id="CHEBI:57844"/>
        <note>ligand shared between two neighboring subunits</note>
    </ligand>
</feature>
<protein>
    <recommendedName>
        <fullName evidence="1">S-adenosylmethionine synthase</fullName>
        <shortName evidence="1">AdoMet synthase</shortName>
        <ecNumber evidence="1">2.5.1.6</ecNumber>
    </recommendedName>
    <alternativeName>
        <fullName evidence="1">MAT</fullName>
    </alternativeName>
    <alternativeName>
        <fullName evidence="1">Methionine adenosyltransferase</fullName>
    </alternativeName>
</protein>
<accession>Q04SB8</accession>
<gene>
    <name evidence="1" type="primary">metK</name>
    <name type="ordered locus">LBJ_1645</name>
</gene>
<reference key="1">
    <citation type="journal article" date="2006" name="Proc. Natl. Acad. Sci. U.S.A.">
        <title>Genome reduction in Leptospira borgpetersenii reflects limited transmission potential.</title>
        <authorList>
            <person name="Bulach D.M."/>
            <person name="Zuerner R.L."/>
            <person name="Wilson P."/>
            <person name="Seemann T."/>
            <person name="McGrath A."/>
            <person name="Cullen P.A."/>
            <person name="Davis J."/>
            <person name="Johnson M."/>
            <person name="Kuczek E."/>
            <person name="Alt D.P."/>
            <person name="Peterson-Burch B."/>
            <person name="Coppel R.L."/>
            <person name="Rood J.I."/>
            <person name="Davies J.K."/>
            <person name="Adler B."/>
        </authorList>
    </citation>
    <scope>NUCLEOTIDE SEQUENCE [LARGE SCALE GENOMIC DNA]</scope>
    <source>
        <strain>JB197</strain>
    </source>
</reference>
<organism>
    <name type="scientific">Leptospira borgpetersenii serovar Hardjo-bovis (strain JB197)</name>
    <dbReference type="NCBI Taxonomy" id="355277"/>
    <lineage>
        <taxon>Bacteria</taxon>
        <taxon>Pseudomonadati</taxon>
        <taxon>Spirochaetota</taxon>
        <taxon>Spirochaetia</taxon>
        <taxon>Leptospirales</taxon>
        <taxon>Leptospiraceae</taxon>
        <taxon>Leptospira</taxon>
    </lineage>
</organism>
<proteinExistence type="inferred from homology"/>
<sequence length="386" mass="42068">MSLKDFIFTSESVGEGHPDKVCDQISDAILDAYLEQDPKSRVACETLATTNLVVIAGEITSKGKVDAQEIARNVIRDIGYNDITMGFDADFAVVSAHVHAQSPDISQGVTEGEGLFKEQGAGDQGLMFGFAINETPEFMPMPIYYSHELVKHLAGLRHSNKLKFLRPDAKSQVTVEYKDGKPVRVDTVVISTQHSPDVAHKQIEESLIEECIKKVIPANLLVNTKYFINPTGQFIVGGPHGDAGLTGRKIIVDTYGGYGRHGGGAFSGKDPSKVDRSAAYMGRYIAKNVVASGLADKCEVQLAYAIGVAEPVSVHVDTFGTGKISEEELVKRIRANFKLTPRGIIESLKLLEKGRKYRETASYGHFGRKGSTFTWEKTDKTVALKG</sequence>
<keyword id="KW-0067">ATP-binding</keyword>
<keyword id="KW-0963">Cytoplasm</keyword>
<keyword id="KW-0460">Magnesium</keyword>
<keyword id="KW-0479">Metal-binding</keyword>
<keyword id="KW-0547">Nucleotide-binding</keyword>
<keyword id="KW-0554">One-carbon metabolism</keyword>
<keyword id="KW-0630">Potassium</keyword>
<keyword id="KW-0808">Transferase</keyword>
<evidence type="ECO:0000255" key="1">
    <source>
        <dbReference type="HAMAP-Rule" id="MF_00086"/>
    </source>
</evidence>
<name>METK_LEPBJ</name>
<comment type="function">
    <text evidence="1">Catalyzes the formation of S-adenosylmethionine (AdoMet) from methionine and ATP. The overall synthetic reaction is composed of two sequential steps, AdoMet formation and the subsequent tripolyphosphate hydrolysis which occurs prior to release of AdoMet from the enzyme.</text>
</comment>
<comment type="catalytic activity">
    <reaction evidence="1">
        <text>L-methionine + ATP + H2O = S-adenosyl-L-methionine + phosphate + diphosphate</text>
        <dbReference type="Rhea" id="RHEA:21080"/>
        <dbReference type="ChEBI" id="CHEBI:15377"/>
        <dbReference type="ChEBI" id="CHEBI:30616"/>
        <dbReference type="ChEBI" id="CHEBI:33019"/>
        <dbReference type="ChEBI" id="CHEBI:43474"/>
        <dbReference type="ChEBI" id="CHEBI:57844"/>
        <dbReference type="ChEBI" id="CHEBI:59789"/>
        <dbReference type="EC" id="2.5.1.6"/>
    </reaction>
</comment>
<comment type="cofactor">
    <cofactor evidence="1">
        <name>Mg(2+)</name>
        <dbReference type="ChEBI" id="CHEBI:18420"/>
    </cofactor>
    <text evidence="1">Binds 2 divalent ions per subunit.</text>
</comment>
<comment type="cofactor">
    <cofactor evidence="1">
        <name>K(+)</name>
        <dbReference type="ChEBI" id="CHEBI:29103"/>
    </cofactor>
    <text evidence="1">Binds 1 potassium ion per subunit.</text>
</comment>
<comment type="pathway">
    <text evidence="1">Amino-acid biosynthesis; S-adenosyl-L-methionine biosynthesis; S-adenosyl-L-methionine from L-methionine: step 1/1.</text>
</comment>
<comment type="subunit">
    <text evidence="1">Homotetramer; dimer of dimers.</text>
</comment>
<comment type="subcellular location">
    <subcellularLocation>
        <location evidence="1">Cytoplasm</location>
    </subcellularLocation>
</comment>
<comment type="similarity">
    <text evidence="1">Belongs to the AdoMet synthase family.</text>
</comment>